<comment type="function">
    <text evidence="1">Binds 23S rRNA and is also seen to make contacts with the A and possibly P site tRNAs.</text>
</comment>
<comment type="subunit">
    <text evidence="1">Part of the 50S ribosomal subunit.</text>
</comment>
<comment type="similarity">
    <text evidence="1">Belongs to the universal ribosomal protein uL16 family.</text>
</comment>
<organism>
    <name type="scientific">Salmonella heidelberg (strain SL476)</name>
    <dbReference type="NCBI Taxonomy" id="454169"/>
    <lineage>
        <taxon>Bacteria</taxon>
        <taxon>Pseudomonadati</taxon>
        <taxon>Pseudomonadota</taxon>
        <taxon>Gammaproteobacteria</taxon>
        <taxon>Enterobacterales</taxon>
        <taxon>Enterobacteriaceae</taxon>
        <taxon>Salmonella</taxon>
    </lineage>
</organism>
<sequence length="136" mass="15194">MLQPKRTKFRKMHKGRNRGLAAGADVSFGSFGLKAVGRGRLTARQIEAARRAMTRAVKRQGKIWIRVFPDKPITEKPLAVRMGKGKGNVEYWVALIQPGKVLYEMDGVPEELAREAFKLAAAKLPIKTTFVTKTVM</sequence>
<reference key="1">
    <citation type="journal article" date="2011" name="J. Bacteriol.">
        <title>Comparative genomics of 28 Salmonella enterica isolates: evidence for CRISPR-mediated adaptive sublineage evolution.</title>
        <authorList>
            <person name="Fricke W.F."/>
            <person name="Mammel M.K."/>
            <person name="McDermott P.F."/>
            <person name="Tartera C."/>
            <person name="White D.G."/>
            <person name="Leclerc J.E."/>
            <person name="Ravel J."/>
            <person name="Cebula T.A."/>
        </authorList>
    </citation>
    <scope>NUCLEOTIDE SEQUENCE [LARGE SCALE GENOMIC DNA]</scope>
    <source>
        <strain>SL476</strain>
    </source>
</reference>
<keyword id="KW-0687">Ribonucleoprotein</keyword>
<keyword id="KW-0689">Ribosomal protein</keyword>
<keyword id="KW-0694">RNA-binding</keyword>
<keyword id="KW-0699">rRNA-binding</keyword>
<keyword id="KW-0820">tRNA-binding</keyword>
<gene>
    <name evidence="1" type="primary">rplP</name>
    <name type="ordered locus">SeHA_C3737</name>
</gene>
<dbReference type="EMBL" id="CP001120">
    <property type="protein sequence ID" value="ACF70117.1"/>
    <property type="molecule type" value="Genomic_DNA"/>
</dbReference>
<dbReference type="RefSeq" id="WP_000941208.1">
    <property type="nucleotide sequence ID" value="NC_011083.1"/>
</dbReference>
<dbReference type="SMR" id="B4TKK8"/>
<dbReference type="GeneID" id="93035738"/>
<dbReference type="KEGG" id="seh:SeHA_C3737"/>
<dbReference type="HOGENOM" id="CLU_078858_2_1_6"/>
<dbReference type="Proteomes" id="UP000001866">
    <property type="component" value="Chromosome"/>
</dbReference>
<dbReference type="GO" id="GO:0022625">
    <property type="term" value="C:cytosolic large ribosomal subunit"/>
    <property type="evidence" value="ECO:0007669"/>
    <property type="project" value="TreeGrafter"/>
</dbReference>
<dbReference type="GO" id="GO:0019843">
    <property type="term" value="F:rRNA binding"/>
    <property type="evidence" value="ECO:0007669"/>
    <property type="project" value="UniProtKB-UniRule"/>
</dbReference>
<dbReference type="GO" id="GO:0003735">
    <property type="term" value="F:structural constituent of ribosome"/>
    <property type="evidence" value="ECO:0007669"/>
    <property type="project" value="InterPro"/>
</dbReference>
<dbReference type="GO" id="GO:0000049">
    <property type="term" value="F:tRNA binding"/>
    <property type="evidence" value="ECO:0007669"/>
    <property type="project" value="UniProtKB-KW"/>
</dbReference>
<dbReference type="GO" id="GO:0006412">
    <property type="term" value="P:translation"/>
    <property type="evidence" value="ECO:0007669"/>
    <property type="project" value="UniProtKB-UniRule"/>
</dbReference>
<dbReference type="CDD" id="cd01433">
    <property type="entry name" value="Ribosomal_L16_L10e"/>
    <property type="match status" value="1"/>
</dbReference>
<dbReference type="FunFam" id="3.90.1170.10:FF:000001">
    <property type="entry name" value="50S ribosomal protein L16"/>
    <property type="match status" value="1"/>
</dbReference>
<dbReference type="Gene3D" id="3.90.1170.10">
    <property type="entry name" value="Ribosomal protein L10e/L16"/>
    <property type="match status" value="1"/>
</dbReference>
<dbReference type="HAMAP" id="MF_01342">
    <property type="entry name" value="Ribosomal_uL16"/>
    <property type="match status" value="1"/>
</dbReference>
<dbReference type="InterPro" id="IPR047873">
    <property type="entry name" value="Ribosomal_uL16"/>
</dbReference>
<dbReference type="InterPro" id="IPR000114">
    <property type="entry name" value="Ribosomal_uL16_bact-type"/>
</dbReference>
<dbReference type="InterPro" id="IPR020798">
    <property type="entry name" value="Ribosomal_uL16_CS"/>
</dbReference>
<dbReference type="InterPro" id="IPR016180">
    <property type="entry name" value="Ribosomal_uL16_dom"/>
</dbReference>
<dbReference type="InterPro" id="IPR036920">
    <property type="entry name" value="Ribosomal_uL16_sf"/>
</dbReference>
<dbReference type="NCBIfam" id="TIGR01164">
    <property type="entry name" value="rplP_bact"/>
    <property type="match status" value="1"/>
</dbReference>
<dbReference type="PANTHER" id="PTHR12220">
    <property type="entry name" value="50S/60S RIBOSOMAL PROTEIN L16"/>
    <property type="match status" value="1"/>
</dbReference>
<dbReference type="PANTHER" id="PTHR12220:SF13">
    <property type="entry name" value="LARGE RIBOSOMAL SUBUNIT PROTEIN UL16M"/>
    <property type="match status" value="1"/>
</dbReference>
<dbReference type="Pfam" id="PF00252">
    <property type="entry name" value="Ribosomal_L16"/>
    <property type="match status" value="1"/>
</dbReference>
<dbReference type="PRINTS" id="PR00060">
    <property type="entry name" value="RIBOSOMALL16"/>
</dbReference>
<dbReference type="SUPFAM" id="SSF54686">
    <property type="entry name" value="Ribosomal protein L16p/L10e"/>
    <property type="match status" value="1"/>
</dbReference>
<dbReference type="PROSITE" id="PS00586">
    <property type="entry name" value="RIBOSOMAL_L16_1"/>
    <property type="match status" value="1"/>
</dbReference>
<dbReference type="PROSITE" id="PS00701">
    <property type="entry name" value="RIBOSOMAL_L16_2"/>
    <property type="match status" value="1"/>
</dbReference>
<evidence type="ECO:0000255" key="1">
    <source>
        <dbReference type="HAMAP-Rule" id="MF_01342"/>
    </source>
</evidence>
<evidence type="ECO:0000305" key="2"/>
<proteinExistence type="inferred from homology"/>
<protein>
    <recommendedName>
        <fullName evidence="1">Large ribosomal subunit protein uL16</fullName>
    </recommendedName>
    <alternativeName>
        <fullName evidence="2">50S ribosomal protein L16</fullName>
    </alternativeName>
</protein>
<name>RL16_SALHS</name>
<feature type="chain" id="PRO_1000143024" description="Large ribosomal subunit protein uL16">
    <location>
        <begin position="1"/>
        <end position="136"/>
    </location>
</feature>
<accession>B4TKK8</accession>